<gene>
    <name evidence="9 14" type="primary">IntS8</name>
    <name evidence="14" type="ORF">CG5859</name>
</gene>
<reference evidence="15" key="1">
    <citation type="journal article" date="2000" name="Science">
        <title>The genome sequence of Drosophila melanogaster.</title>
        <authorList>
            <person name="Adams M.D."/>
            <person name="Celniker S.E."/>
            <person name="Holt R.A."/>
            <person name="Evans C.A."/>
            <person name="Gocayne J.D."/>
            <person name="Amanatides P.G."/>
            <person name="Scherer S.E."/>
            <person name="Li P.W."/>
            <person name="Hoskins R.A."/>
            <person name="Galle R.F."/>
            <person name="George R.A."/>
            <person name="Lewis S.E."/>
            <person name="Richards S."/>
            <person name="Ashburner M."/>
            <person name="Henderson S.N."/>
            <person name="Sutton G.G."/>
            <person name="Wortman J.R."/>
            <person name="Yandell M.D."/>
            <person name="Zhang Q."/>
            <person name="Chen L.X."/>
            <person name="Brandon R.C."/>
            <person name="Rogers Y.-H.C."/>
            <person name="Blazej R.G."/>
            <person name="Champe M."/>
            <person name="Pfeiffer B.D."/>
            <person name="Wan K.H."/>
            <person name="Doyle C."/>
            <person name="Baxter E.G."/>
            <person name="Helt G."/>
            <person name="Nelson C.R."/>
            <person name="Miklos G.L.G."/>
            <person name="Abril J.F."/>
            <person name="Agbayani A."/>
            <person name="An H.-J."/>
            <person name="Andrews-Pfannkoch C."/>
            <person name="Baldwin D."/>
            <person name="Ballew R.M."/>
            <person name="Basu A."/>
            <person name="Baxendale J."/>
            <person name="Bayraktaroglu L."/>
            <person name="Beasley E.M."/>
            <person name="Beeson K.Y."/>
            <person name="Benos P.V."/>
            <person name="Berman B.P."/>
            <person name="Bhandari D."/>
            <person name="Bolshakov S."/>
            <person name="Borkova D."/>
            <person name="Botchan M.R."/>
            <person name="Bouck J."/>
            <person name="Brokstein P."/>
            <person name="Brottier P."/>
            <person name="Burtis K.C."/>
            <person name="Busam D.A."/>
            <person name="Butler H."/>
            <person name="Cadieu E."/>
            <person name="Center A."/>
            <person name="Chandra I."/>
            <person name="Cherry J.M."/>
            <person name="Cawley S."/>
            <person name="Dahlke C."/>
            <person name="Davenport L.B."/>
            <person name="Davies P."/>
            <person name="de Pablos B."/>
            <person name="Delcher A."/>
            <person name="Deng Z."/>
            <person name="Mays A.D."/>
            <person name="Dew I."/>
            <person name="Dietz S.M."/>
            <person name="Dodson K."/>
            <person name="Doup L.E."/>
            <person name="Downes M."/>
            <person name="Dugan-Rocha S."/>
            <person name="Dunkov B.C."/>
            <person name="Dunn P."/>
            <person name="Durbin K.J."/>
            <person name="Evangelista C.C."/>
            <person name="Ferraz C."/>
            <person name="Ferriera S."/>
            <person name="Fleischmann W."/>
            <person name="Fosler C."/>
            <person name="Gabrielian A.E."/>
            <person name="Garg N.S."/>
            <person name="Gelbart W.M."/>
            <person name="Glasser K."/>
            <person name="Glodek A."/>
            <person name="Gong F."/>
            <person name="Gorrell J.H."/>
            <person name="Gu Z."/>
            <person name="Guan P."/>
            <person name="Harris M."/>
            <person name="Harris N.L."/>
            <person name="Harvey D.A."/>
            <person name="Heiman T.J."/>
            <person name="Hernandez J.R."/>
            <person name="Houck J."/>
            <person name="Hostin D."/>
            <person name="Houston K.A."/>
            <person name="Howland T.J."/>
            <person name="Wei M.-H."/>
            <person name="Ibegwam C."/>
            <person name="Jalali M."/>
            <person name="Kalush F."/>
            <person name="Karpen G.H."/>
            <person name="Ke Z."/>
            <person name="Kennison J.A."/>
            <person name="Ketchum K.A."/>
            <person name="Kimmel B.E."/>
            <person name="Kodira C.D."/>
            <person name="Kraft C.L."/>
            <person name="Kravitz S."/>
            <person name="Kulp D."/>
            <person name="Lai Z."/>
            <person name="Lasko P."/>
            <person name="Lei Y."/>
            <person name="Levitsky A.A."/>
            <person name="Li J.H."/>
            <person name="Li Z."/>
            <person name="Liang Y."/>
            <person name="Lin X."/>
            <person name="Liu X."/>
            <person name="Mattei B."/>
            <person name="McIntosh T.C."/>
            <person name="McLeod M.P."/>
            <person name="McPherson D."/>
            <person name="Merkulov G."/>
            <person name="Milshina N.V."/>
            <person name="Mobarry C."/>
            <person name="Morris J."/>
            <person name="Moshrefi A."/>
            <person name="Mount S.M."/>
            <person name="Moy M."/>
            <person name="Murphy B."/>
            <person name="Murphy L."/>
            <person name="Muzny D.M."/>
            <person name="Nelson D.L."/>
            <person name="Nelson D.R."/>
            <person name="Nelson K.A."/>
            <person name="Nixon K."/>
            <person name="Nusskern D.R."/>
            <person name="Pacleb J.M."/>
            <person name="Palazzolo M."/>
            <person name="Pittman G.S."/>
            <person name="Pan S."/>
            <person name="Pollard J."/>
            <person name="Puri V."/>
            <person name="Reese M.G."/>
            <person name="Reinert K."/>
            <person name="Remington K."/>
            <person name="Saunders R.D.C."/>
            <person name="Scheeler F."/>
            <person name="Shen H."/>
            <person name="Shue B.C."/>
            <person name="Siden-Kiamos I."/>
            <person name="Simpson M."/>
            <person name="Skupski M.P."/>
            <person name="Smith T.J."/>
            <person name="Spier E."/>
            <person name="Spradling A.C."/>
            <person name="Stapleton M."/>
            <person name="Strong R."/>
            <person name="Sun E."/>
            <person name="Svirskas R."/>
            <person name="Tector C."/>
            <person name="Turner R."/>
            <person name="Venter E."/>
            <person name="Wang A.H."/>
            <person name="Wang X."/>
            <person name="Wang Z.-Y."/>
            <person name="Wassarman D.A."/>
            <person name="Weinstock G.M."/>
            <person name="Weissenbach J."/>
            <person name="Williams S.M."/>
            <person name="Woodage T."/>
            <person name="Worley K.C."/>
            <person name="Wu D."/>
            <person name="Yang S."/>
            <person name="Yao Q.A."/>
            <person name="Ye J."/>
            <person name="Yeh R.-F."/>
            <person name="Zaveri J.S."/>
            <person name="Zhan M."/>
            <person name="Zhang G."/>
            <person name="Zhao Q."/>
            <person name="Zheng L."/>
            <person name="Zheng X.H."/>
            <person name="Zhong F.N."/>
            <person name="Zhong W."/>
            <person name="Zhou X."/>
            <person name="Zhu S.C."/>
            <person name="Zhu X."/>
            <person name="Smith H.O."/>
            <person name="Gibbs R.A."/>
            <person name="Myers E.W."/>
            <person name="Rubin G.M."/>
            <person name="Venter J.C."/>
        </authorList>
    </citation>
    <scope>NUCLEOTIDE SEQUENCE [LARGE SCALE GENOMIC DNA]</scope>
    <source>
        <strain evidence="15">Berkeley</strain>
    </source>
</reference>
<reference evidence="15" key="2">
    <citation type="journal article" date="2002" name="Genome Biol.">
        <title>Annotation of the Drosophila melanogaster euchromatic genome: a systematic review.</title>
        <authorList>
            <person name="Misra S."/>
            <person name="Crosby M.A."/>
            <person name="Mungall C.J."/>
            <person name="Matthews B.B."/>
            <person name="Campbell K.S."/>
            <person name="Hradecky P."/>
            <person name="Huang Y."/>
            <person name="Kaminker J.S."/>
            <person name="Millburn G.H."/>
            <person name="Prochnik S.E."/>
            <person name="Smith C.D."/>
            <person name="Tupy J.L."/>
            <person name="Whitfield E.J."/>
            <person name="Bayraktaroglu L."/>
            <person name="Berman B.P."/>
            <person name="Bettencourt B.R."/>
            <person name="Celniker S.E."/>
            <person name="de Grey A.D.N.J."/>
            <person name="Drysdale R.A."/>
            <person name="Harris N.L."/>
            <person name="Richter J."/>
            <person name="Russo S."/>
            <person name="Schroeder A.J."/>
            <person name="Shu S.Q."/>
            <person name="Stapleton M."/>
            <person name="Yamada C."/>
            <person name="Ashburner M."/>
            <person name="Gelbart W.M."/>
            <person name="Rubin G.M."/>
            <person name="Lewis S.E."/>
        </authorList>
    </citation>
    <scope>GENOME REANNOTATION</scope>
    <source>
        <strain evidence="15">Berkeley</strain>
    </source>
</reference>
<reference evidence="13" key="3">
    <citation type="journal article" date="2000" name="Science">
        <title>From sequence to chromosome: the tip of the X chromosome of D. melanogaster.</title>
        <authorList>
            <person name="Benos P.V."/>
            <person name="Gatt M.K."/>
            <person name="Ashburner M."/>
            <person name="Murphy L."/>
            <person name="Harris D."/>
            <person name="Barrell B.G."/>
            <person name="Ferraz C."/>
            <person name="Vidal S."/>
            <person name="Brun C."/>
            <person name="Demailles J."/>
            <person name="Cadieu E."/>
            <person name="Dreano S."/>
            <person name="Gloux S."/>
            <person name="Lelaure V."/>
            <person name="Mottier S."/>
            <person name="Galibert F."/>
            <person name="Borkova D."/>
            <person name="Minana B."/>
            <person name="Kafatos F.C."/>
            <person name="Louis C."/>
            <person name="Siden-Kiamos I."/>
            <person name="Bolshakov S."/>
            <person name="Papagiannakis G."/>
            <person name="Spanos L."/>
            <person name="Cox S."/>
            <person name="Madueno E."/>
            <person name="de Pablos B."/>
            <person name="Modolell J."/>
            <person name="Peter A."/>
            <person name="Schoettler P."/>
            <person name="Werner M."/>
            <person name="Mourkioti F."/>
            <person name="Beinert N."/>
            <person name="Dowe G."/>
            <person name="Schaefer U."/>
            <person name="Jaeckle H."/>
            <person name="Bucheton A."/>
            <person name="Callister D.M."/>
            <person name="Campbell L.A."/>
            <person name="Darlamitsou A."/>
            <person name="Henderson N.S."/>
            <person name="McMillan P.J."/>
            <person name="Salles C."/>
            <person name="Tait E.A."/>
            <person name="Valenti P."/>
            <person name="Saunders R.D.C."/>
            <person name="Glover D.M."/>
        </authorList>
    </citation>
    <scope>NUCLEOTIDE SEQUENCE [LARGE SCALE GENOMIC DNA]</scope>
    <source>
        <strain>Oregon-R</strain>
    </source>
</reference>
<reference evidence="11" key="4">
    <citation type="journal article" date="2002" name="Genome Biol.">
        <title>A Drosophila full-length cDNA resource.</title>
        <authorList>
            <person name="Stapleton M."/>
            <person name="Carlson J.W."/>
            <person name="Brokstein P."/>
            <person name="Yu C."/>
            <person name="Champe M."/>
            <person name="George R.A."/>
            <person name="Guarin H."/>
            <person name="Kronmiller B."/>
            <person name="Pacleb J.M."/>
            <person name="Park S."/>
            <person name="Wan K.H."/>
            <person name="Rubin G.M."/>
            <person name="Celniker S.E."/>
        </authorList>
    </citation>
    <scope>NUCLEOTIDE SEQUENCE [LARGE SCALE MRNA]</scope>
    <source>
        <strain evidence="11">Berkeley</strain>
        <tissue evidence="11">Head</tissue>
    </source>
</reference>
<reference evidence="12" key="5">
    <citation type="submission" date="2008-09" db="EMBL/GenBank/DDBJ databases">
        <authorList>
            <person name="Carlson J."/>
            <person name="Booth B."/>
            <person name="Frise E."/>
            <person name="Park S."/>
            <person name="Wan K."/>
            <person name="Yu C."/>
            <person name="Celniker S."/>
        </authorList>
    </citation>
    <scope>NUCLEOTIDE SEQUENCE [LARGE SCALE MRNA]</scope>
</reference>
<reference evidence="10" key="6">
    <citation type="journal article" date="2011" name="Mol. Cell. Biol.">
        <title>A subset of Drosophila integrator proteins is essential for efficient U7 snRNA and spliceosomal snRNA 3'-end formation.</title>
        <authorList>
            <person name="Ezzeddine N."/>
            <person name="Chen J."/>
            <person name="Waltenspiel B."/>
            <person name="Burch B."/>
            <person name="Albrecht T."/>
            <person name="Zhuo M."/>
            <person name="Warren W.D."/>
            <person name="Marzluff W.F."/>
            <person name="Wagner E.J."/>
        </authorList>
    </citation>
    <scope>FUNCTION</scope>
</reference>
<reference evidence="10" key="7">
    <citation type="journal article" date="2012" name="RNA">
        <title>An RNAi screen identifies additional members of the Drosophila Integrator complex and a requirement for cyclin C/Cdk8 in snRNA 3'-end formation.</title>
        <authorList>
            <person name="Chen J."/>
            <person name="Ezzeddine N."/>
            <person name="Waltenspiel B."/>
            <person name="Albrecht T.R."/>
            <person name="Warren W.D."/>
            <person name="Marzluff W.F."/>
            <person name="Wagner E.J."/>
        </authorList>
    </citation>
    <scope>FUNCTION</scope>
    <scope>SUBUNIT</scope>
</reference>
<reference key="8">
    <citation type="journal article" date="2019" name="Genes Dev.">
        <title>The Integrator complex cleaves nascent mRNAs to attenuate transcription.</title>
        <authorList>
            <person name="Tatomer D.C."/>
            <person name="Elrod N.D."/>
            <person name="Liang D."/>
            <person name="Xiao M.S."/>
            <person name="Jiang J.Z."/>
            <person name="Jonathan M."/>
            <person name="Huang K.L."/>
            <person name="Wagner E.J."/>
            <person name="Cherry S."/>
            <person name="Wilusz J.E."/>
        </authorList>
    </citation>
    <scope>IDENTIFICATION IN THE INTEGRATOR COMPLEX</scope>
</reference>
<reference key="9">
    <citation type="journal article" date="2020" name="Mol. Cell">
        <title>Integrator recruits protein phosphatase 2A to prevent pause release and facilitate transcription termination.</title>
        <authorList>
            <person name="Huang K.L."/>
            <person name="Jee D."/>
            <person name="Stein C.B."/>
            <person name="Elrod N.D."/>
            <person name="Henriques T."/>
            <person name="Mascibroda L.G."/>
            <person name="Baillat D."/>
            <person name="Russell W.K."/>
            <person name="Adelman K."/>
            <person name="Wagner E.J."/>
        </authorList>
    </citation>
    <scope>FUNCTION</scope>
    <scope>IDENTIFICATION IN THE INTAC COMPLEX</scope>
    <scope>DOMAIN</scope>
    <scope>MUTAGENESIS OF 19-TRP--PHE-22 AND 23-LEU--PRO-26</scope>
</reference>
<reference key="10">
    <citation type="journal article" date="2023" name="Mol. Cell">
        <title>IntS6 and the Integrator phosphatase module tune the efficiency of select premature transcription termination events.</title>
        <authorList>
            <person name="Fujiwara R."/>
            <person name="Zhai S.N."/>
            <person name="Liang D."/>
            <person name="Shah A.P."/>
            <person name="Tracey M."/>
            <person name="Ma X.K."/>
            <person name="Fields C.J."/>
            <person name="Mendoza-Figueroa M.S."/>
            <person name="Meline M.C."/>
            <person name="Tatomer D.C."/>
            <person name="Yang L."/>
            <person name="Wilusz J.E."/>
        </authorList>
    </citation>
    <scope>IDENTIFICATION IN THE INTAC COMPLEX</scope>
</reference>
<reference key="11">
    <citation type="journal article" date="2024" name="Mol. Cell">
        <title>Cytoplasmic binding partners of the Integrator endonuclease INTS11 and its paralog CPSF73 are required for their nuclear function.</title>
        <authorList>
            <person name="Lin M.H."/>
            <person name="Jensen M.K."/>
            <person name="Elrod N.D."/>
            <person name="Chu H.F."/>
            <person name="Haseley M."/>
            <person name="Beam A.C."/>
            <person name="Huang K.L."/>
            <person name="Chiang W."/>
            <person name="Russell W.K."/>
            <person name="Williams K."/>
            <person name="Proschel C."/>
            <person name="Wagner E.J."/>
            <person name="Tong L."/>
        </authorList>
    </citation>
    <scope>IDENTIFICATION IN THE INTEGRATOR COMPLEX</scope>
    <scope>SUBCELLULAR LOCATION</scope>
</reference>
<name>INT8_DROME</name>
<keyword id="KW-0158">Chromosome</keyword>
<keyword id="KW-0539">Nucleus</keyword>
<keyword id="KW-1185">Reference proteome</keyword>
<protein>
    <recommendedName>
        <fullName evidence="8">Integrator complex subunit 8</fullName>
    </recommendedName>
</protein>
<sequence length="1007" mass="113480">MDDPLKPKPVPLAAETVLWFEFLLDPHKITQHLQRPHPEPSAMELIVQFISMTPNTAQESVGTPGSDLQNLNQTPSNSGPIPGVVGGAPAPTTPTASGGVGMPHSPQRPAEKGLQLNRKQLALKILELKVATWLKWDLDALEKNLPVIMQLALLRDLCTISYGCSLSIPLPNDFDARISAAGNERAARFALTIYHRMLLRMQLIKEQALKAPRPQNTMYQTVDQLQQFLDTPTQPSIEYLQQLCASTKPFYIFHYDSFVPLRCDDIGNGQNYDVMHLITPQELRAQLHYELAQYYLYTKQYVLAREAAAACNTNLQAIPPQTTLYYCHIRPSELEGLLQACGISAEEQSLLEKFQQSLLNNYTDIVSILRMDNRRREIPFISRRQVELDIEGSISTGILKETVQLQLQVAALNVVRNIFEWGSIFGSVEYFEKYRELDCLPPLVEALQEMLPHCTFKEQAALKHFLIDCLLHQGGQSRQLLQTVRGFGLFSSDELQDIDEQMLQATPPVPTNSLASLSDWMCHSKMSRVDVGALERQLISCTNANTVRILLVKLCATAPGKPLWAINPSWDVPQPLKTLIMAMPVSFLQDFSYVLLGKARELATRGNYIDAVSMLSVLKSENQRQEMAANVQLMCKLITWEILHIQITQCLEEWHQKPLDLQSLGGRCKQCLGALQAGDSIVPRPDILESCAIMLLNLTEFPPLLYLDKRAGPLELPLAFAATFIEMEKMKGPKKVCRDAWELMLSMFLNVPKRGSSGVGGISSLQAFLQRIRHQSVFGLAISMIGKVHNILKDDPNHDLSCEYMQLWPTSINNPVSYSLRSVCETLQWLLSEALSYYPQTISWLKMKGDLDLAIGNNESAMRCYVNALVTGTDYCTMPLQRNVADDYVIRKMIRCAANLGCHMQATVLCQFLDEIDYGIVFKNLSEKSSNFTDAMDAYYSCIWDTTLLEFIVNLHAKRGEHSRKLEAISMMGTLELNANNNEEIKRESAMVRKSRFLRALAKQYLL</sequence>
<evidence type="ECO:0000256" key="1">
    <source>
        <dbReference type="SAM" id="MobiDB-lite"/>
    </source>
</evidence>
<evidence type="ECO:0000269" key="2">
    <source>
    </source>
</evidence>
<evidence type="ECO:0000269" key="3">
    <source>
    </source>
</evidence>
<evidence type="ECO:0000269" key="4">
    <source>
    </source>
</evidence>
<evidence type="ECO:0000269" key="5">
    <source>
    </source>
</evidence>
<evidence type="ECO:0000269" key="6">
    <source>
    </source>
</evidence>
<evidence type="ECO:0000269" key="7">
    <source>
    </source>
</evidence>
<evidence type="ECO:0000303" key="8">
    <source>
    </source>
</evidence>
<evidence type="ECO:0000303" key="9">
    <source>
    </source>
</evidence>
<evidence type="ECO:0000305" key="10"/>
<evidence type="ECO:0000312" key="11">
    <source>
        <dbReference type="EMBL" id="AAL13635.1"/>
    </source>
</evidence>
<evidence type="ECO:0000312" key="12">
    <source>
        <dbReference type="EMBL" id="ACH92502.1"/>
    </source>
</evidence>
<evidence type="ECO:0000312" key="13">
    <source>
        <dbReference type="EMBL" id="CAA21313.1"/>
    </source>
</evidence>
<evidence type="ECO:0000312" key="14">
    <source>
        <dbReference type="FlyBase" id="FBgn0289323"/>
    </source>
</evidence>
<evidence type="ECO:0000312" key="15">
    <source>
        <dbReference type="Proteomes" id="UP000000803"/>
    </source>
</evidence>
<organism evidence="15">
    <name type="scientific">Drosophila melanogaster</name>
    <name type="common">Fruit fly</name>
    <dbReference type="NCBI Taxonomy" id="7227"/>
    <lineage>
        <taxon>Eukaryota</taxon>
        <taxon>Metazoa</taxon>
        <taxon>Ecdysozoa</taxon>
        <taxon>Arthropoda</taxon>
        <taxon>Hexapoda</taxon>
        <taxon>Insecta</taxon>
        <taxon>Pterygota</taxon>
        <taxon>Neoptera</taxon>
        <taxon>Endopterygota</taxon>
        <taxon>Diptera</taxon>
        <taxon>Brachycera</taxon>
        <taxon>Muscomorpha</taxon>
        <taxon>Ephydroidea</taxon>
        <taxon>Drosophilidae</taxon>
        <taxon>Drosophila</taxon>
        <taxon>Sophophora</taxon>
    </lineage>
</organism>
<dbReference type="EMBL" id="AE013599">
    <property type="protein sequence ID" value="AAF57945.1"/>
    <property type="molecule type" value="Genomic_DNA"/>
</dbReference>
<dbReference type="EMBL" id="BT044437">
    <property type="protein sequence ID" value="ACH92502.1"/>
    <property type="molecule type" value="mRNA"/>
</dbReference>
<dbReference type="EMBL" id="AL031863">
    <property type="protein sequence ID" value="CAA21313.1"/>
    <property type="molecule type" value="Genomic_DNA"/>
</dbReference>
<dbReference type="EMBL" id="AY058406">
    <property type="protein sequence ID" value="AAL13635.1"/>
    <property type="molecule type" value="mRNA"/>
</dbReference>
<dbReference type="PIR" id="T13693">
    <property type="entry name" value="T13693"/>
</dbReference>
<dbReference type="RefSeq" id="NP_611162.2">
    <property type="nucleotide sequence ID" value="NM_137318.3"/>
</dbReference>
<dbReference type="SMR" id="A1ZAK1"/>
<dbReference type="FunCoup" id="A1ZAK1">
    <property type="interactions" value="2440"/>
</dbReference>
<dbReference type="IntAct" id="A1ZAK1">
    <property type="interactions" value="6"/>
</dbReference>
<dbReference type="STRING" id="7227.FBpp0086186"/>
<dbReference type="GlyGen" id="A1ZAK1">
    <property type="glycosylation" value="1 site"/>
</dbReference>
<dbReference type="PaxDb" id="7227-FBpp0086186"/>
<dbReference type="EnsemblMetazoa" id="FBtr0087036">
    <property type="protein sequence ID" value="FBpp0086186"/>
    <property type="gene ID" value="FBgn0025830"/>
</dbReference>
<dbReference type="GeneID" id="36886"/>
<dbReference type="KEGG" id="dme:Dmel_CG5859"/>
<dbReference type="UCSC" id="CG5859-RA">
    <property type="organism name" value="d. melanogaster"/>
</dbReference>
<dbReference type="AGR" id="FB:FBgn0289323"/>
<dbReference type="CTD" id="55656"/>
<dbReference type="FlyBase" id="FBgn0289323">
    <property type="gene designation" value="IntS8"/>
</dbReference>
<dbReference type="VEuPathDB" id="VectorBase:FBgn0025830"/>
<dbReference type="eggNOG" id="ENOG502QQS8">
    <property type="taxonomic scope" value="Eukaryota"/>
</dbReference>
<dbReference type="GeneTree" id="ENSGT00390000007597"/>
<dbReference type="HOGENOM" id="CLU_012129_0_0_1"/>
<dbReference type="InParanoid" id="A1ZAK1"/>
<dbReference type="OMA" id="ASLSDWM"/>
<dbReference type="OrthoDB" id="64340at2759"/>
<dbReference type="PhylomeDB" id="A1ZAK1"/>
<dbReference type="Reactome" id="R-DME-6807505">
    <property type="pathway name" value="RNA polymerase II transcribes snRNA genes"/>
</dbReference>
<dbReference type="BioGRID-ORCS" id="36886">
    <property type="hits" value="0 hits in 1 CRISPR screen"/>
</dbReference>
<dbReference type="ChiTaRS" id="IntS8">
    <property type="organism name" value="fly"/>
</dbReference>
<dbReference type="GenomeRNAi" id="36886"/>
<dbReference type="PRO" id="PR:A1ZAK1"/>
<dbReference type="Proteomes" id="UP000000803">
    <property type="component" value="Chromosome 2R"/>
</dbReference>
<dbReference type="Bgee" id="FBgn0025830">
    <property type="expression patterns" value="Expressed in oviduct (Drosophila) and 42 other cell types or tissues"/>
</dbReference>
<dbReference type="GO" id="GO:0005694">
    <property type="term" value="C:chromosome"/>
    <property type="evidence" value="ECO:0007669"/>
    <property type="project" value="UniProtKB-SubCell"/>
</dbReference>
<dbReference type="GO" id="GO:0005829">
    <property type="term" value="C:cytosol"/>
    <property type="evidence" value="ECO:0000314"/>
    <property type="project" value="FlyBase"/>
</dbReference>
<dbReference type="GO" id="GO:0160232">
    <property type="term" value="C:INTAC complex"/>
    <property type="evidence" value="ECO:0000314"/>
    <property type="project" value="UniProtKB"/>
</dbReference>
<dbReference type="GO" id="GO:0032039">
    <property type="term" value="C:integrator complex"/>
    <property type="evidence" value="ECO:0000314"/>
    <property type="project" value="UniProtKB"/>
</dbReference>
<dbReference type="GO" id="GO:0005634">
    <property type="term" value="C:nucleus"/>
    <property type="evidence" value="ECO:0000314"/>
    <property type="project" value="FlyBase"/>
</dbReference>
<dbReference type="GO" id="GO:0030514">
    <property type="term" value="P:negative regulation of BMP signaling pathway"/>
    <property type="evidence" value="ECO:0000315"/>
    <property type="project" value="FlyBase"/>
</dbReference>
<dbReference type="GO" id="GO:0010628">
    <property type="term" value="P:positive regulation of gene expression"/>
    <property type="evidence" value="ECO:0000315"/>
    <property type="project" value="FlyBase"/>
</dbReference>
<dbReference type="GO" id="GO:0045666">
    <property type="term" value="P:positive regulation of neuron differentiation"/>
    <property type="evidence" value="ECO:0000315"/>
    <property type="project" value="FlyBase"/>
</dbReference>
<dbReference type="GO" id="GO:0071168">
    <property type="term" value="P:protein localization to chromatin"/>
    <property type="evidence" value="ECO:0000314"/>
    <property type="project" value="UniProtKB"/>
</dbReference>
<dbReference type="GO" id="GO:0160240">
    <property type="term" value="P:RNA polymerase II transcription initiation surveillance"/>
    <property type="evidence" value="ECO:0000314"/>
    <property type="project" value="UniProtKB"/>
</dbReference>
<dbReference type="GO" id="GO:0034472">
    <property type="term" value="P:snRNA 3'-end processing"/>
    <property type="evidence" value="ECO:0000314"/>
    <property type="project" value="FlyBase"/>
</dbReference>
<dbReference type="GO" id="GO:0016180">
    <property type="term" value="P:snRNA processing"/>
    <property type="evidence" value="ECO:0000250"/>
    <property type="project" value="FlyBase"/>
</dbReference>
<dbReference type="InterPro" id="IPR038751">
    <property type="entry name" value="Int8"/>
</dbReference>
<dbReference type="PANTHER" id="PTHR13350">
    <property type="entry name" value="INTEGRATOR COMPLEX SUBUNIT 8"/>
    <property type="match status" value="1"/>
</dbReference>
<dbReference type="PANTHER" id="PTHR13350:SF1">
    <property type="entry name" value="INTEGRATOR COMPLEX SUBUNIT 8"/>
    <property type="match status" value="1"/>
</dbReference>
<proteinExistence type="evidence at protein level"/>
<accession>A1ZAK1</accession>
<accession>O96831</accession>
<accession>Q95U02</accession>
<comment type="function">
    <text evidence="2 3 5">Component of the integrator complex, a multiprotein complex that terminates RNA polymerase II (Pol II) transcription in the promoter-proximal region of genes (PubMed:21078872, PubMed:23097424, PubMed:32966759). The integrator complex provides a quality checkpoint during transcription elongation by driving premature transcription termination of transcripts that are unfavorably configured for transcriptional elongation: the complex terminates transcription by (1) catalyzing dephosphorylation of the C-terminal domain (CTD) of Pol II subunit Polr2A/Rbp1 and Spt5, and (2) degrading the exiting nascent RNA transcript via endonuclease activity (PubMed:32966759). The integrator complex is also involved in the 3'-end processing of the U7 snRNA, and also the spliceosomal snRNAs U1, U2, U4 and U5 (PubMed:21078872, PubMed:23097424). Within the integrator complex, INTS8 is required for the recruitment of protein phosphatase 2A (PP2A) to transcription pause-release checkpoint (PubMed:32966759).</text>
</comment>
<comment type="subunit">
    <text evidence="3 4 5 6 7">Belongs to the multiprotein complex Integrator, at least composed of IntS1, IntS2, IntS3, IntS4, omd/IntS5, IntS6, defl/IntS7, IntS8, IntS9, IntS10, IntS11, IntS12, asun/IntS13, IntS14 and IntS15 (PubMed:23097424, PubMed:31530651, PubMed:32966759, PubMed:37995689, PubMed:39032490). The core complex associates with protein phosphatase 2A subunits mts/PP2A and Pp2A-29B, to form the Integrator-PP2A (INTAC) complex (PubMed:32966759, PubMed:37995689).</text>
</comment>
<comment type="subcellular location">
    <subcellularLocation>
        <location evidence="5 7">Nucleus</location>
    </subcellularLocation>
    <subcellularLocation>
        <location evidence="5">Chromosome</location>
    </subcellularLocation>
    <text evidence="5">Associates with chromatin and transcription pause-release checkpoint.</text>
</comment>
<comment type="domain">
    <text evidence="5">The WFEF motif is required for the recruitment of protein phosphatase 2A (PP2A) to transcription pause-release checkpoint.</text>
</comment>
<comment type="similarity">
    <text evidence="10">Belongs to the Integrator subunit 8 family.</text>
</comment>
<feature type="chain" id="PRO_0000437660" description="Integrator complex subunit 8">
    <location>
        <begin position="1"/>
        <end position="1007"/>
    </location>
</feature>
<feature type="region of interest" description="Disordered" evidence="1">
    <location>
        <begin position="56"/>
        <end position="112"/>
    </location>
</feature>
<feature type="short sequence motif" description="WFEF motif" evidence="5">
    <location>
        <begin position="19"/>
        <end position="24"/>
    </location>
</feature>
<feature type="compositionally biased region" description="Polar residues" evidence="1">
    <location>
        <begin position="56"/>
        <end position="78"/>
    </location>
</feature>
<feature type="compositionally biased region" description="Low complexity" evidence="1">
    <location>
        <begin position="79"/>
        <end position="97"/>
    </location>
</feature>
<feature type="mutagenesis site" description="In mutant m5; abolished recruitment of protein phosphatase 2A subunits." evidence="5">
    <original>WFEF</original>
    <variation>AAAA</variation>
    <location>
        <begin position="19"/>
        <end position="22"/>
    </location>
</feature>
<feature type="mutagenesis site" description="In mutant m6; abolished recruitment of protein phosphatase 2A subunits." evidence="5">
    <original>LLDP</original>
    <variation>AAAA</variation>
    <location>
        <begin position="23"/>
        <end position="26"/>
    </location>
</feature>
<feature type="sequence conflict" description="In Ref. 5; AAL13635." evidence="10" ref="5">
    <original>G</original>
    <variation>R</variation>
    <location>
        <position position="87"/>
    </location>
</feature>
<feature type="sequence conflict" description="In Ref. 3; CAA21313." evidence="10" ref="3">
    <original>M</original>
    <variation>L</variation>
    <location>
        <position position="371"/>
    </location>
</feature>